<dbReference type="EMBL" id="AE017224">
    <property type="protein sequence ID" value="AAX76194.1"/>
    <property type="status" value="ALT_INIT"/>
    <property type="molecule type" value="Genomic_DNA"/>
</dbReference>
<dbReference type="RefSeq" id="WP_002967329.1">
    <property type="nucleotide sequence ID" value="NC_006933.1"/>
</dbReference>
<dbReference type="SMR" id="Q577J0"/>
<dbReference type="EnsemblBacteria" id="AAX76194">
    <property type="protein sequence ID" value="AAX76194"/>
    <property type="gene ID" value="BruAb2_0801"/>
</dbReference>
<dbReference type="KEGG" id="bmb:BruAb2_0801"/>
<dbReference type="HOGENOM" id="CLU_027128_4_0_5"/>
<dbReference type="Proteomes" id="UP000000540">
    <property type="component" value="Chromosome II"/>
</dbReference>
<dbReference type="GO" id="GO:0006865">
    <property type="term" value="P:amino acid transport"/>
    <property type="evidence" value="ECO:0007669"/>
    <property type="project" value="UniProtKB-KW"/>
</dbReference>
<dbReference type="CDD" id="cd06340">
    <property type="entry name" value="PBP1_ABC_ligand_binding-like"/>
    <property type="match status" value="1"/>
</dbReference>
<dbReference type="Gene3D" id="3.40.50.2300">
    <property type="match status" value="2"/>
</dbReference>
<dbReference type="InterPro" id="IPR051010">
    <property type="entry name" value="BCAA_transport"/>
</dbReference>
<dbReference type="InterPro" id="IPR028081">
    <property type="entry name" value="Leu-bd"/>
</dbReference>
<dbReference type="InterPro" id="IPR000709">
    <property type="entry name" value="Leu_Ile_Val-bd"/>
</dbReference>
<dbReference type="InterPro" id="IPR028082">
    <property type="entry name" value="Peripla_BP_I"/>
</dbReference>
<dbReference type="PANTHER" id="PTHR30483:SF37">
    <property type="entry name" value="ABC TRANSPORTER SUBSTRATE-BINDING PROTEIN"/>
    <property type="match status" value="1"/>
</dbReference>
<dbReference type="PANTHER" id="PTHR30483">
    <property type="entry name" value="LEUCINE-SPECIFIC-BINDING PROTEIN"/>
    <property type="match status" value="1"/>
</dbReference>
<dbReference type="Pfam" id="PF13458">
    <property type="entry name" value="Peripla_BP_6"/>
    <property type="match status" value="1"/>
</dbReference>
<dbReference type="PRINTS" id="PR00337">
    <property type="entry name" value="LEUILEVALBP"/>
</dbReference>
<dbReference type="SUPFAM" id="SSF53822">
    <property type="entry name" value="Periplasmic binding protein-like I"/>
    <property type="match status" value="1"/>
</dbReference>
<reference key="1">
    <citation type="journal article" date="2005" name="J. Bacteriol.">
        <title>Completion of the genome sequence of Brucella abortus and comparison to the highly similar genomes of Brucella melitensis and Brucella suis.</title>
        <authorList>
            <person name="Halling S.M."/>
            <person name="Peterson-Burch B.D."/>
            <person name="Bricker B.J."/>
            <person name="Zuerner R.L."/>
            <person name="Qing Z."/>
            <person name="Li L.-L."/>
            <person name="Kapur V."/>
            <person name="Alt D.P."/>
            <person name="Olsen S.C."/>
        </authorList>
    </citation>
    <scope>NUCLEOTIDE SEQUENCE [LARGE SCALE GENOMIC DNA]</scope>
    <source>
        <strain>9-941</strain>
    </source>
</reference>
<accession>Q577J0</accession>
<proteinExistence type="inferred from homology"/>
<organism>
    <name type="scientific">Brucella abortus biovar 1 (strain 9-941)</name>
    <dbReference type="NCBI Taxonomy" id="262698"/>
    <lineage>
        <taxon>Bacteria</taxon>
        <taxon>Pseudomonadati</taxon>
        <taxon>Pseudomonadota</taxon>
        <taxon>Alphaproteobacteria</taxon>
        <taxon>Hyphomicrobiales</taxon>
        <taxon>Brucellaceae</taxon>
        <taxon>Brucella/Ochrobactrum group</taxon>
        <taxon>Brucella</taxon>
    </lineage>
</organism>
<keyword id="KW-0029">Amino-acid transport</keyword>
<keyword id="KW-0732">Signal</keyword>
<keyword id="KW-0813">Transport</keyword>
<feature type="signal peptide" evidence="1">
    <location>
        <begin position="1"/>
        <end position="22"/>
    </location>
</feature>
<feature type="chain" id="PRO_0000285741" description="Leu/Ile/Val-binding protein homolog 7">
    <location>
        <begin position="23"/>
        <end position="399"/>
    </location>
</feature>
<comment type="function">
    <text evidence="2">Component of an amino-acid transport system.</text>
</comment>
<comment type="similarity">
    <text evidence="2">Belongs to the leucine-binding protein family.</text>
</comment>
<comment type="sequence caution" evidence="2">
    <conflict type="erroneous initiation">
        <sequence resource="EMBL-CDS" id="AAX76194"/>
    </conflict>
</comment>
<sequence length="399" mass="42429">MEKHLIALSVAALQAGAAPASADIKMGSLYPFSGPLALLGDESARGLEIAVEEINAKGGVQGEKIVLVRGDAVDNNQAIGEARRLISVENVAGIFGSFSSGRAVAASQVSELAGVPYFELGAVADEITDRGLENVYRANPYARDFAQMIVEMLQKKIAPKLGRDSKDLKIAVIYEDSSYGTSVAKHEETFLKEAGLNMVLSQSYPGNTVDMSSLVLDLKSAGADVVLQTSYQSDSVLFLQQANEGGYKPSAIVGAGGGYSLQPTADAVGHDVIEAAYDVDFTQFAVNTSFTPGLEEFVEAYKKKYGETPRSGYSLTNYVGAKVILEALNKVKGFDAAAVKQALSAVDIEAGKTAMGYGFKFDQNNQNERASMMGMQWQDGKLVTVYPDAAAISEIRLPQ</sequence>
<protein>
    <recommendedName>
        <fullName>Leu/Ile/Val-binding protein homolog 7</fullName>
    </recommendedName>
</protein>
<gene>
    <name type="ordered locus">BruAb2_0801</name>
</gene>
<evidence type="ECO:0000255" key="1"/>
<evidence type="ECO:0000305" key="2"/>
<name>LIVB7_BRUAB</name>